<comment type="function">
    <text evidence="1">Involved in protein precursor import into chloroplasts. May be part of an intermediate translocation complex acting as a protein-conducting channel at the inner envelope.</text>
</comment>
<comment type="subunit">
    <text evidence="1">Part of the Tic complex.</text>
</comment>
<comment type="subcellular location">
    <subcellularLocation>
        <location evidence="1">Plastid</location>
        <location evidence="1">Chloroplast inner membrane</location>
        <topology evidence="2">Multi-pass membrane protein</topology>
    </subcellularLocation>
</comment>
<comment type="similarity">
    <text evidence="3">Belongs to the TIC214 family.</text>
</comment>
<accession>Q6YXP5</accession>
<organism>
    <name type="scientific">Physcomitrium patens</name>
    <name type="common">Spreading-leaved earth moss</name>
    <name type="synonym">Physcomitrella patens</name>
    <dbReference type="NCBI Taxonomy" id="3218"/>
    <lineage>
        <taxon>Eukaryota</taxon>
        <taxon>Viridiplantae</taxon>
        <taxon>Streptophyta</taxon>
        <taxon>Embryophyta</taxon>
        <taxon>Bryophyta</taxon>
        <taxon>Bryophytina</taxon>
        <taxon>Bryopsida</taxon>
        <taxon>Funariidae</taxon>
        <taxon>Funariales</taxon>
        <taxon>Funariaceae</taxon>
        <taxon>Physcomitrium</taxon>
    </lineage>
</organism>
<gene>
    <name evidence="1" type="primary">TIC214</name>
    <name type="synonym">ycf1</name>
</gene>
<geneLocation type="chloroplast"/>
<dbReference type="EMBL" id="AP005672">
    <property type="protein sequence ID" value="BAC85096.1"/>
    <property type="molecule type" value="Genomic_DNA"/>
</dbReference>
<dbReference type="RefSeq" id="NP_904246.1">
    <property type="nucleotide sequence ID" value="NC_005087.1"/>
</dbReference>
<dbReference type="STRING" id="3218.Q6YXP5"/>
<dbReference type="PaxDb" id="3218-PP1S207_91V6.1"/>
<dbReference type="GeneID" id="2546760"/>
<dbReference type="KEGG" id="ppp:2546760"/>
<dbReference type="eggNOG" id="ENOG502QSDY">
    <property type="taxonomic scope" value="Eukaryota"/>
</dbReference>
<dbReference type="HOGENOM" id="CLU_1689676_0_0_1"/>
<dbReference type="InParanoid" id="Q6YXP5"/>
<dbReference type="OrthoDB" id="1938219at2759"/>
<dbReference type="Proteomes" id="UP000006727">
    <property type="component" value="Chloroplast"/>
</dbReference>
<dbReference type="GO" id="GO:0009706">
    <property type="term" value="C:chloroplast inner membrane"/>
    <property type="evidence" value="ECO:0007669"/>
    <property type="project" value="UniProtKB-SubCell"/>
</dbReference>
<dbReference type="GO" id="GO:0015031">
    <property type="term" value="P:protein transport"/>
    <property type="evidence" value="ECO:0007669"/>
    <property type="project" value="UniProtKB-KW"/>
</dbReference>
<dbReference type="InterPro" id="IPR008896">
    <property type="entry name" value="TIC214"/>
</dbReference>
<dbReference type="PANTHER" id="PTHR33163:SF40">
    <property type="entry name" value="PROTEIN TIC 214"/>
    <property type="match status" value="1"/>
</dbReference>
<dbReference type="PANTHER" id="PTHR33163">
    <property type="entry name" value="PROTEIN TIC 214-RELATED"/>
    <property type="match status" value="1"/>
</dbReference>
<dbReference type="Pfam" id="PF05758">
    <property type="entry name" value="Ycf1"/>
    <property type="match status" value="3"/>
</dbReference>
<proteinExistence type="inferred from homology"/>
<name>TI214_PHYPA</name>
<protein>
    <recommendedName>
        <fullName evidence="1">Protein TIC 214</fullName>
    </recommendedName>
    <alternativeName>
        <fullName evidence="1">Translocon at the inner envelope membrane of chloroplasts 214</fullName>
        <shortName evidence="1">AtTIC214</shortName>
    </alternativeName>
</protein>
<sequence length="1603" mass="192705">MITNTPLQFSVLWASILSWINISSPLILFGLYYGFLTTLPIGPSQILSIRAFLLEGNLSGTVAVSGLILGQLIIFLSIYYSPLYTLLLKPHTVTLLVLPYLLFYWYRIKDLLDYQSLRPINSIKDSRIYKIFFDSFIFQLLNPVLLPSPILVRLINLFFFRYSNNFLFVLSCFFGWLSGHLFFFNCIKFLLIRIEKDSPILYLLVKRIIYRTFSIFVLACILLYLGRAPVPFFTKKLNDELQFNKSGFLWLNKPWPTFFFDYYRWNRPFRYIENNRFTNKSPVKKSVSQYFFNISLSDGKQKISFTALPSLSIFEKDLKTYLNISTNNNNLYKNWLDTKNERKDNLLYELENRIQALDNGLVIKEVIEKKTSLSNNEGINLTKINDPFLNGSFRGKAIITKSPWLLKENSYKLKKNRKIVYLKENKLKIWISNRWRELRRKNLPLPWEPLNKNARRSLVLLIQGSKNKKLKRKLQQIHFSEEQALINLTKQTNISDLTEKLENKHLLNKKFTKISHFNWELVLNLSPRQRAVYFKELEYEKWQILVRSWKNLLSVNSINSTQLNKFILLLKKLFTFHKKFALQEISKELPRWTSKLRNDKFDVIAIGITDIRQRKVKNLGYLIKGKEKRRKIVRRFSQQSDFRRRLVKGSMRSRRRKTLIWKILQLKTHSPFFLRINEKHIPFQISLNKLNLIDVKHIFKNPVEKQKKIALFPTKNNVTLKKKTKADRLAIANRWDFPLAQWGRSWLLLIQSYFRKYLILPILIISKNIIRLLLFQTPEWSEDWNDWNKEMYIKCTYDGIEVSEKALPEQWLRDGLQIKIIYPFILKPWHNLQLETNIKKNLNDLMNTNDNFSTNIKKKKIKYSYLTAWGFETNAPFGDIKKKPSFWKPIRKELKKKWKKNILLNFNKIYSKFSLVKKKITNNSNNSINNESKDLVKENIKINNNLKFNLTNKNYNKKLPEQISSKFSQTILSENQIKNKYKISTNIQKLENLKFLKKSKIEKITKKINFDKIEFFNKLNNDNKVYFTNKQKKIENKQKLIKYYKKNISLVNKWSYFFKLNFNKINKNFFQFSINIIRFNINLISKIQQNLILIKNRKIWNPLKVSQINQKKDKINYKYSNDFGEKIQSLKINVNQENILLMSQAYLFHKIWQIEKTNNKCDFKYLLKNWTSNSVIKKKINRNLKKMDLKFLKEQNWKNWLQNFNKYNLSSQVWYKLAPQKWRNQINYQWKGKEQNNLKFSEKQIKALTLSKEKTFFYKLFIDSLLEQNRKISKRYKYNYLCYSYLDFKKQPNFLESTKNKKESLFNNEILQISKNQVNNNYKQDISLKSNLILWLIPTLTEKKYINKIETINRNNISLLKEKNKKNSRNKKTLRERERHETIRQWKWKSKNIEKRFKELGDMASLMTFMQDQENSVSLSAKMRENLDLFRLLFCRDVGVNKLTINSEHRLPRVLDDQILMYKVISLFLKSKNRFKKNVNITNFNLSTSRIEFFQNNNQNNNFNLINLEDIMLLKHRKELKVLNLLNLKQNTNQILNFNKVILKENKRKRIELNKIQNKNQNLTIKHFLWPTFRLEDLACVNRFWFNTSNGSRFTMLRIRMYT</sequence>
<reference key="1">
    <citation type="journal article" date="2003" name="Nucleic Acids Res.">
        <title>Complete chloroplast DNA sequence of the moss Physcomitrella patens: evidence for the loss and relocation of rpoA from the chloroplast to the nucleus.</title>
        <authorList>
            <person name="Sugiura C."/>
            <person name="Kobayashi Y."/>
            <person name="Setsuyuki A."/>
            <person name="Sugita C."/>
            <person name="Sugita M."/>
        </authorList>
    </citation>
    <scope>NUCLEOTIDE SEQUENCE [LARGE SCALE GENOMIC DNA]</scope>
    <source>
        <strain>cv. Gransden 2004</strain>
    </source>
</reference>
<keyword id="KW-0150">Chloroplast</keyword>
<keyword id="KW-0472">Membrane</keyword>
<keyword id="KW-0934">Plastid</keyword>
<keyword id="KW-1001">Plastid inner membrane</keyword>
<keyword id="KW-0653">Protein transport</keyword>
<keyword id="KW-1185">Reference proteome</keyword>
<keyword id="KW-0812">Transmembrane</keyword>
<keyword id="KW-1133">Transmembrane helix</keyword>
<keyword id="KW-0813">Transport</keyword>
<evidence type="ECO:0000250" key="1">
    <source>
        <dbReference type="UniProtKB" id="P56785"/>
    </source>
</evidence>
<evidence type="ECO:0000255" key="2"/>
<evidence type="ECO:0000305" key="3"/>
<feature type="chain" id="PRO_0000262622" description="Protein TIC 214">
    <location>
        <begin position="1"/>
        <end position="1603"/>
    </location>
</feature>
<feature type="transmembrane region" description="Helical" evidence="2">
    <location>
        <begin position="11"/>
        <end position="31"/>
    </location>
</feature>
<feature type="transmembrane region" description="Helical" evidence="2">
    <location>
        <begin position="58"/>
        <end position="78"/>
    </location>
</feature>
<feature type="transmembrane region" description="Helical" evidence="2">
    <location>
        <begin position="86"/>
        <end position="106"/>
    </location>
</feature>
<feature type="transmembrane region" description="Helical" evidence="2">
    <location>
        <begin position="131"/>
        <end position="151"/>
    </location>
</feature>
<feature type="transmembrane region" description="Helical" evidence="2">
    <location>
        <begin position="167"/>
        <end position="187"/>
    </location>
</feature>
<feature type="transmembrane region" description="Helical" evidence="2">
    <location>
        <begin position="213"/>
        <end position="233"/>
    </location>
</feature>